<accession>B4T8D8</accession>
<comment type="function">
    <text evidence="1">Hydrolyzes trehalose to glucose. Could be involved, in cells returning to low osmolarity conditions, in the utilization of the accumulated cytoplasmic trehalose, which was synthesized in response to high osmolarity.</text>
</comment>
<comment type="catalytic activity">
    <reaction evidence="1">
        <text>alpha,alpha-trehalose + H2O = alpha-D-glucose + beta-D-glucose</text>
        <dbReference type="Rhea" id="RHEA:32675"/>
        <dbReference type="ChEBI" id="CHEBI:15377"/>
        <dbReference type="ChEBI" id="CHEBI:15903"/>
        <dbReference type="ChEBI" id="CHEBI:16551"/>
        <dbReference type="ChEBI" id="CHEBI:17925"/>
        <dbReference type="EC" id="3.2.1.28"/>
    </reaction>
</comment>
<comment type="pathway">
    <text evidence="1">Glycan degradation; trehalose degradation; D-glucose from alpha,alpha-trehalose: step 1/1.</text>
</comment>
<comment type="subunit">
    <text evidence="1">Monomer.</text>
</comment>
<comment type="subcellular location">
    <subcellularLocation>
        <location evidence="1">Cytoplasm</location>
    </subcellularLocation>
</comment>
<comment type="similarity">
    <text evidence="1">Belongs to the glycosyl hydrolase 37 family.</text>
</comment>
<reference key="1">
    <citation type="journal article" date="2011" name="J. Bacteriol.">
        <title>Comparative genomics of 28 Salmonella enterica isolates: evidence for CRISPR-mediated adaptive sublineage evolution.</title>
        <authorList>
            <person name="Fricke W.F."/>
            <person name="Mammel M.K."/>
            <person name="McDermott P.F."/>
            <person name="Tartera C."/>
            <person name="White D.G."/>
            <person name="Leclerc J.E."/>
            <person name="Ravel J."/>
            <person name="Cebula T.A."/>
        </authorList>
    </citation>
    <scope>NUCLEOTIDE SEQUENCE [LARGE SCALE GENOMIC DNA]</scope>
    <source>
        <strain>SL476</strain>
    </source>
</reference>
<keyword id="KW-0963">Cytoplasm</keyword>
<keyword id="KW-0326">Glycosidase</keyword>
<keyword id="KW-0378">Hydrolase</keyword>
<evidence type="ECO:0000255" key="1">
    <source>
        <dbReference type="HAMAP-Rule" id="MF_01059"/>
    </source>
</evidence>
<gene>
    <name evidence="1" type="primary">treF</name>
    <name type="ordered locus">SeHA_C3917</name>
</gene>
<dbReference type="EC" id="3.2.1.28" evidence="1"/>
<dbReference type="EMBL" id="CP001120">
    <property type="protein sequence ID" value="ACF68056.1"/>
    <property type="molecule type" value="Genomic_DNA"/>
</dbReference>
<dbReference type="RefSeq" id="WP_000934257.1">
    <property type="nucleotide sequence ID" value="NC_011083.1"/>
</dbReference>
<dbReference type="SMR" id="B4T8D8"/>
<dbReference type="CAZy" id="GH37">
    <property type="family name" value="Glycoside Hydrolase Family 37"/>
</dbReference>
<dbReference type="KEGG" id="seh:SeHA_C3917"/>
<dbReference type="HOGENOM" id="CLU_006451_3_1_6"/>
<dbReference type="UniPathway" id="UPA00300">
    <property type="reaction ID" value="UER00535"/>
</dbReference>
<dbReference type="Proteomes" id="UP000001866">
    <property type="component" value="Chromosome"/>
</dbReference>
<dbReference type="GO" id="GO:0005737">
    <property type="term" value="C:cytoplasm"/>
    <property type="evidence" value="ECO:0007669"/>
    <property type="project" value="UniProtKB-SubCell"/>
</dbReference>
<dbReference type="GO" id="GO:0004555">
    <property type="term" value="F:alpha,alpha-trehalase activity"/>
    <property type="evidence" value="ECO:0007669"/>
    <property type="project" value="UniProtKB-UniRule"/>
</dbReference>
<dbReference type="GO" id="GO:0071474">
    <property type="term" value="P:cellular hyperosmotic response"/>
    <property type="evidence" value="ECO:0007669"/>
    <property type="project" value="InterPro"/>
</dbReference>
<dbReference type="GO" id="GO:0005993">
    <property type="term" value="P:trehalose catabolic process"/>
    <property type="evidence" value="ECO:0007669"/>
    <property type="project" value="UniProtKB-UniRule"/>
</dbReference>
<dbReference type="FunFam" id="1.50.10.10:FF:000003">
    <property type="entry name" value="Cytoplasmic trehalase"/>
    <property type="match status" value="1"/>
</dbReference>
<dbReference type="Gene3D" id="1.50.10.10">
    <property type="match status" value="1"/>
</dbReference>
<dbReference type="HAMAP" id="MF_01059">
    <property type="entry name" value="Cyt_trehalase"/>
    <property type="match status" value="1"/>
</dbReference>
<dbReference type="InterPro" id="IPR008928">
    <property type="entry name" value="6-hairpin_glycosidase_sf"/>
</dbReference>
<dbReference type="InterPro" id="IPR012341">
    <property type="entry name" value="6hp_glycosidase-like_sf"/>
</dbReference>
<dbReference type="InterPro" id="IPR023715">
    <property type="entry name" value="Cyt_trehalase"/>
</dbReference>
<dbReference type="InterPro" id="IPR001661">
    <property type="entry name" value="Glyco_hydro_37"/>
</dbReference>
<dbReference type="InterPro" id="IPR018232">
    <property type="entry name" value="Glyco_hydro_37_CS"/>
</dbReference>
<dbReference type="NCBIfam" id="NF009773">
    <property type="entry name" value="PRK13270.1"/>
    <property type="match status" value="1"/>
</dbReference>
<dbReference type="NCBIfam" id="NF009774">
    <property type="entry name" value="PRK13271.1"/>
    <property type="match status" value="1"/>
</dbReference>
<dbReference type="PANTHER" id="PTHR23403:SF8">
    <property type="entry name" value="CYTOPLASMIC TREHALASE"/>
    <property type="match status" value="1"/>
</dbReference>
<dbReference type="PANTHER" id="PTHR23403">
    <property type="entry name" value="TREHALASE"/>
    <property type="match status" value="1"/>
</dbReference>
<dbReference type="Pfam" id="PF01204">
    <property type="entry name" value="Trehalase"/>
    <property type="match status" value="1"/>
</dbReference>
<dbReference type="PRINTS" id="PR00744">
    <property type="entry name" value="GLHYDRLASE37"/>
</dbReference>
<dbReference type="SUPFAM" id="SSF48208">
    <property type="entry name" value="Six-hairpin glycosidases"/>
    <property type="match status" value="1"/>
</dbReference>
<dbReference type="PROSITE" id="PS00927">
    <property type="entry name" value="TREHALASE_1"/>
    <property type="match status" value="1"/>
</dbReference>
<dbReference type="PROSITE" id="PS00928">
    <property type="entry name" value="TREHALASE_2"/>
    <property type="match status" value="1"/>
</dbReference>
<sequence>MLNQKLNPTPSEDLTIDVDLLYETDPCELKLDEMIEAEPEPEMIEGLPASDALTPADRYLELFEHVQSTKLFPDSKTFPDCAPKMDPLDILIRYRKVRRHRDFDLRRFVENHFWLPETLSSEYVSNPENSLKEHIDQLWPILTREPQDHIPWSSLLALPQSYIVPGGRFSETYYWDSYFTMLGLAESGREDLLKCMADNFAWMIENYGHIPNGNRTYYLSRSQPPVFALMVELFEEDGVRGARRYLDHLKMEYAFWMDGAESLALNQAYRHVVRMPDGSLLNRYWDDRDTPRDESWLEDVETAKHSGRPPNEVYRDLRAGAASGWDYSSRWLRDAGRLASIRTTQFIPIDLNAFLYKLESAIANISALKGERDTEALFRQKASDRRAAVNHYLWDDENGCYRDYDWRREEMALFSAASIVPLYVGMANHEQADRLANVVRSRLLTPGGIMATEYETGEQWDKPNGWAPLQWMAIQGFKRYGDDMLGDEIAHNWLKTVNHFYQEHHKLIEKYHISGGTPREGGGGEYPLQDGFGWTNGVVRRLIGLYGEP</sequence>
<feature type="chain" id="PRO_1000136412" description="Cytoplasmic trehalase">
    <location>
        <begin position="1"/>
        <end position="549"/>
    </location>
</feature>
<feature type="active site" description="Proton donor/acceptor" evidence="1">
    <location>
        <position position="326"/>
    </location>
</feature>
<feature type="active site" description="Proton donor/acceptor" evidence="1">
    <location>
        <position position="509"/>
    </location>
</feature>
<feature type="binding site" evidence="1">
    <location>
        <position position="168"/>
    </location>
    <ligand>
        <name>substrate</name>
    </ligand>
</feature>
<feature type="binding site" evidence="1">
    <location>
        <begin position="175"/>
        <end position="176"/>
    </location>
    <ligand>
        <name>substrate</name>
    </ligand>
</feature>
<feature type="binding site" evidence="1">
    <location>
        <position position="212"/>
    </location>
    <ligand>
        <name>substrate</name>
    </ligand>
</feature>
<feature type="binding site" evidence="1">
    <location>
        <begin position="221"/>
        <end position="223"/>
    </location>
    <ligand>
        <name>substrate</name>
    </ligand>
</feature>
<feature type="binding site" evidence="1">
    <location>
        <begin position="292"/>
        <end position="294"/>
    </location>
    <ligand>
        <name>substrate</name>
    </ligand>
</feature>
<feature type="binding site" evidence="1">
    <location>
        <position position="324"/>
    </location>
    <ligand>
        <name>substrate</name>
    </ligand>
</feature>
<feature type="binding site" evidence="1">
    <location>
        <position position="525"/>
    </location>
    <ligand>
        <name>substrate</name>
    </ligand>
</feature>
<organism>
    <name type="scientific">Salmonella heidelberg (strain SL476)</name>
    <dbReference type="NCBI Taxonomy" id="454169"/>
    <lineage>
        <taxon>Bacteria</taxon>
        <taxon>Pseudomonadati</taxon>
        <taxon>Pseudomonadota</taxon>
        <taxon>Gammaproteobacteria</taxon>
        <taxon>Enterobacterales</taxon>
        <taxon>Enterobacteriaceae</taxon>
        <taxon>Salmonella</taxon>
    </lineage>
</organism>
<name>TREF_SALHS</name>
<proteinExistence type="inferred from homology"/>
<protein>
    <recommendedName>
        <fullName evidence="1">Cytoplasmic trehalase</fullName>
        <ecNumber evidence="1">3.2.1.28</ecNumber>
    </recommendedName>
    <alternativeName>
        <fullName evidence="1">Alpha,alpha-trehalase</fullName>
    </alternativeName>
    <alternativeName>
        <fullName evidence="1">Alpha,alpha-trehalose glucohydrolase</fullName>
    </alternativeName>
</protein>